<proteinExistence type="evidence at protein level"/>
<protein>
    <recommendedName>
        <fullName evidence="2">Hexon-interlacing protein</fullName>
    </recommendedName>
    <alternativeName>
        <fullName evidence="2">Protein IX</fullName>
    </alternativeName>
</protein>
<sequence>MSTNSFDGSIVSSYLTTRMPPWAGVRQNVMGSSIDGRPVLPANSTTLTYETVSGTPLETAASAAASAAAATARGIVTDFAFLSPLASSAASRSSARDDKLTALLAQLDSLTRELNVVSQQLLDLRQQVSALKASSPPNAV</sequence>
<keyword id="KW-0002">3D-structure</keyword>
<keyword id="KW-1232">Capsid decoration protein</keyword>
<keyword id="KW-0167">Capsid protein</keyword>
<keyword id="KW-0175">Coiled coil</keyword>
<keyword id="KW-1048">Host nucleus</keyword>
<keyword id="KW-0945">Host-virus interaction</keyword>
<keyword id="KW-1185">Reference proteome</keyword>
<keyword id="KW-0946">Virion</keyword>
<keyword id="KW-1160">Virus entry into host cell</keyword>
<organism>
    <name type="scientific">Human adenovirus C serotype 5</name>
    <name type="common">HAdV-5</name>
    <name type="synonym">Human adenovirus 5</name>
    <dbReference type="NCBI Taxonomy" id="28285"/>
    <lineage>
        <taxon>Viruses</taxon>
        <taxon>Varidnaviria</taxon>
        <taxon>Bamfordvirae</taxon>
        <taxon>Preplasmiviricota</taxon>
        <taxon>Tectiliviricetes</taxon>
        <taxon>Rowavirales</taxon>
        <taxon>Adenoviridae</taxon>
        <taxon>Mastadenovirus</taxon>
        <taxon>Human mastadenovirus C</taxon>
    </lineage>
</organism>
<dbReference type="EMBL" id="M73260">
    <property type="status" value="NOT_ANNOTATED_CDS"/>
    <property type="molecule type" value="Genomic_DNA"/>
</dbReference>
<dbReference type="EMBL" id="X02996">
    <property type="protein sequence ID" value="CAA26746.1"/>
    <property type="molecule type" value="Genomic_DNA"/>
</dbReference>
<dbReference type="PIR" id="A03853">
    <property type="entry name" value="SXAD95"/>
</dbReference>
<dbReference type="RefSeq" id="AP_000200.1">
    <property type="nucleotide sequence ID" value="AC_000008.1"/>
</dbReference>
<dbReference type="PDB" id="6B1T">
    <property type="method" value="EM"/>
    <property type="resolution" value="3.20 A"/>
    <property type="chains" value="Q/R/S/T=1-140"/>
</dbReference>
<dbReference type="PDB" id="6CGV">
    <property type="method" value="X-ray"/>
    <property type="resolution" value="3.80 A"/>
    <property type="chains" value="P/Q/R/S=1-140"/>
</dbReference>
<dbReference type="PDB" id="7S78">
    <property type="method" value="EM"/>
    <property type="resolution" value="3.72 A"/>
    <property type="chains" value="P/Q/R/S=1-140"/>
</dbReference>
<dbReference type="PDBsum" id="6B1T"/>
<dbReference type="PDBsum" id="6CGV"/>
<dbReference type="PDBsum" id="7S78"/>
<dbReference type="EMDB" id="EMD-24881"/>
<dbReference type="EMDB" id="EMD-7034"/>
<dbReference type="SMR" id="P03281"/>
<dbReference type="DIP" id="DIP-29895N"/>
<dbReference type="IntAct" id="P03281">
    <property type="interactions" value="3"/>
</dbReference>
<dbReference type="MINT" id="P03281"/>
<dbReference type="Proteomes" id="UP000004992">
    <property type="component" value="Genome"/>
</dbReference>
<dbReference type="GO" id="GO:0042025">
    <property type="term" value="C:host cell nucleus"/>
    <property type="evidence" value="ECO:0007669"/>
    <property type="project" value="UniProtKB-SubCell"/>
</dbReference>
<dbReference type="GO" id="GO:0098021">
    <property type="term" value="C:viral capsid, decoration"/>
    <property type="evidence" value="ECO:0000314"/>
    <property type="project" value="UniProtKB"/>
</dbReference>
<dbReference type="GO" id="GO:0031423">
    <property type="term" value="F:hexon binding"/>
    <property type="evidence" value="ECO:0007669"/>
    <property type="project" value="InterPro"/>
</dbReference>
<dbReference type="GO" id="GO:0046718">
    <property type="term" value="P:symbiont entry into host cell"/>
    <property type="evidence" value="ECO:0007669"/>
    <property type="project" value="UniProtKB-UniRule"/>
</dbReference>
<dbReference type="Gene3D" id="6.10.250.3040">
    <property type="match status" value="1"/>
</dbReference>
<dbReference type="HAMAP" id="MF_04050">
    <property type="entry name" value="ADV_CAP9"/>
    <property type="match status" value="1"/>
</dbReference>
<dbReference type="InterPro" id="IPR005641">
    <property type="entry name" value="Hexon_assoc_IX"/>
</dbReference>
<dbReference type="Pfam" id="PF03955">
    <property type="entry name" value="Adeno_PIX"/>
    <property type="match status" value="1"/>
</dbReference>
<reference key="1">
    <citation type="journal article" date="1981" name="Cell">
        <title>The 2.2 kb E1b mRNA of human Ad12 and Ad5 codes for two tumor antigens starting at different AUG triplets.</title>
        <authorList>
            <person name="Bos J.L."/>
            <person name="Polder L.J."/>
            <person name="Bernards R."/>
            <person name="Schrier P.I."/>
            <person name="van den Elsen P.J."/>
            <person name="van der Eb A.J."/>
            <person name="van Ormondt H."/>
        </authorList>
    </citation>
    <scope>NUCLEOTIDE SEQUENCE [GENOMIC DNA]</scope>
</reference>
<reference key="2">
    <citation type="journal article" date="1980" name="Gene">
        <title>The nucleotide sequence of adenovirus type 5 early region E1: the region between map positions 8.0 (HindIII site) and 11.8 (SmaI site).</title>
        <authorList>
            <person name="Maat J."/>
            <person name="van Beveren C.P."/>
            <person name="van Ormondt H."/>
        </authorList>
    </citation>
    <scope>NUCLEOTIDE SEQUENCE [GENOMIC DNA]</scope>
</reference>
<reference key="3">
    <citation type="journal article" date="1992" name="Virology">
        <title>The sequence of the genome of adenovirus type 5 and its comparison with the genome of adenovirus type 2.</title>
        <authorList>
            <person name="Chroboczek J."/>
            <person name="Bieber F."/>
            <person name="Jacrot B."/>
        </authorList>
    </citation>
    <scope>NUCLEOTIDE SEQUENCE [GENOMIC DNA]</scope>
</reference>
<reference key="4">
    <citation type="journal article" date="2012" name="Nat. Methods">
        <title>De novo derivation of proteomes from transcriptomes for transcript and protein identification.</title>
        <authorList>
            <person name="Evans V.C."/>
            <person name="Barker G."/>
            <person name="Heesom K.J."/>
            <person name="Fan J."/>
            <person name="Bessant C."/>
            <person name="Matthews D.A."/>
        </authorList>
    </citation>
    <scope>NUCLEOTIDE SEQUENCE [MRNA]</scope>
</reference>
<reference key="5">
    <citation type="journal article" date="2010" name="Science">
        <title>Atomic structure of human adenovirus by cryo-EM reveals interactions among protein networks.</title>
        <authorList>
            <person name="Liu H."/>
            <person name="Jin L."/>
            <person name="Koh S.B."/>
            <person name="Atanasov I."/>
            <person name="Schein S."/>
            <person name="Wu L."/>
            <person name="Zhou Z.H."/>
        </authorList>
    </citation>
    <scope>STRUCTURE BY ELECTRON MICROSCOPY (3.6 ANGSTROMS) OF THE VIRAL PARTICLE</scope>
    <scope>FUNCTION</scope>
    <scope>SUBCELLULAR LOCATION</scope>
    <scope>INTERACTION WITH HEXON PROTEIN</scope>
    <scope>DOMAIN</scope>
</reference>
<reference key="6">
    <citation type="journal article" date="2012" name="Viruses">
        <title>Latest insights on adenovirus structure and assembly.</title>
        <authorList>
            <person name="San Martin C."/>
        </authorList>
    </citation>
    <scope>REVIEW</scope>
</reference>
<reference key="7">
    <citation type="journal article" date="2014" name="Proc. Natl. Acad. Sci. U.S.A.">
        <title>Structures and organization of adenovirus cement proteins provide insights into the role of capsid maturation in virus entry and infection.</title>
        <authorList>
            <person name="Reddy V.S."/>
            <person name="Nemerow G.R."/>
        </authorList>
    </citation>
    <scope>X-RAY CRYSTALLOGRAPHY (3.80 ANGSTROMS)</scope>
    <scope>INTERACTION WITH THE HEXON PROTEIN</scope>
    <scope>FUNCTION</scope>
    <scope>SUBCELLULAR LOCATION</scope>
    <scope>DOMAIN</scope>
</reference>
<comment type="function">
    <text evidence="2 3 4">Structural component of the virion that acts as a cement protein on the capsid exterior and forms triskelion structures consisting of three molecules that stabilize three hexon trimers at the center of each icosahedral facet and fixes the peripentonal hexons. Dispensable for assembly. During virus entry, recruits the anterograde motor kinesin-1 to the capsid docked at the nuclear pore complex thereby subjecting the docked capsid to a pulling force. The resulting tension leads to capsid disruption, dispersion of capsid fragments toward cell periphery and eventually viral DNA entry into the host nucleus.</text>
</comment>
<comment type="subunit">
    <text evidence="1 2 3 4">Homotrimer. Interacts with hexon protein; this interaction tethers the hexons together (PubMed:20798312, PubMed:25071205). Self-interacts with adjacent proteins (PubMed:20798312, PubMed:25071205). Interacts with kinesin light chain KLC1; this interaction leads to capsid disruption at the nuclear pore complex during virus entry into host cell (By similarity).</text>
</comment>
<comment type="subcellular location">
    <subcellularLocation>
        <location evidence="2 3 4">Virion</location>
    </subcellularLocation>
    <subcellularLocation>
        <location evidence="2 6">Host nucleus</location>
    </subcellularLocation>
    <text evidence="2 3 4">Located in the canyons between the hexons on the outer surface of the capsid. Forms a sort of hairnet on the outer side of the virion. Present in 240 copies per virion.</text>
</comment>
<comment type="induction">
    <text evidence="2">Expressed in the intermediate phase of the viral replicative cycle.</text>
</comment>
<comment type="domain">
    <text evidence="2 3 4">Three N-terminal domains of hexon-interlacing protein form triskelions between hexon capsomers.</text>
</comment>
<comment type="miscellaneous">
    <text evidence="2">This protein is only encoded by mastadenoviruses, and may therefore play a role in mammals tropism.</text>
</comment>
<comment type="similarity">
    <text evidence="2 5">Belongs to the adenoviridae hexon-interlacing protein family.</text>
</comment>
<feature type="chain" id="PRO_0000221846" description="Hexon-interlacing protein" evidence="2">
    <location>
        <begin position="1"/>
        <end position="140"/>
    </location>
</feature>
<feature type="coiled-coil region" evidence="2">
    <location>
        <begin position="100"/>
        <end position="127"/>
    </location>
</feature>
<organismHost>
    <name type="scientific">Homo sapiens</name>
    <name type="common">Human</name>
    <dbReference type="NCBI Taxonomy" id="9606"/>
</organismHost>
<name>CAP9_ADE05</name>
<evidence type="ECO:0000250" key="1">
    <source>
        <dbReference type="UniProtKB" id="P03282"/>
    </source>
</evidence>
<evidence type="ECO:0000255" key="2">
    <source>
        <dbReference type="HAMAP-Rule" id="MF_04050"/>
    </source>
</evidence>
<evidence type="ECO:0000269" key="3">
    <source>
    </source>
</evidence>
<evidence type="ECO:0000269" key="4">
    <source>
    </source>
</evidence>
<evidence type="ECO:0000305" key="5"/>
<evidence type="ECO:0000305" key="6">
    <source>
    </source>
</evidence>
<accession>P03281</accession>
<gene>
    <name evidence="2" type="primary">IX</name>
</gene>